<reference key="1">
    <citation type="journal article" date="1996" name="Yeast">
        <title>The sequence of 12.8 kb from the left arm of chromosome XIV reveals a sigma element, a pro-tRNA and six complete open reading frames, one of which encodes a protein similar to the human leukotriene A4 hydrolase.</title>
        <authorList>
            <person name="Nasr F."/>
            <person name="Becam A.-M."/>
            <person name="Herbert C.J."/>
        </authorList>
    </citation>
    <scope>NUCLEOTIDE SEQUENCE [GENOMIC DNA]</scope>
    <source>
        <strain>ATCC 96604 / S288c / FY1679</strain>
    </source>
</reference>
<reference key="2">
    <citation type="journal article" date="1997" name="Nature">
        <title>The nucleotide sequence of Saccharomyces cerevisiae chromosome XIV and its evolutionary implications.</title>
        <authorList>
            <person name="Philippsen P."/>
            <person name="Kleine K."/>
            <person name="Poehlmann R."/>
            <person name="Duesterhoeft A."/>
            <person name="Hamberg K."/>
            <person name="Hegemann J.H."/>
            <person name="Obermaier B."/>
            <person name="Urrestarazu L.A."/>
            <person name="Aert R."/>
            <person name="Albermann K."/>
            <person name="Altmann R."/>
            <person name="Andre B."/>
            <person name="Baladron V."/>
            <person name="Ballesta J.P.G."/>
            <person name="Becam A.-M."/>
            <person name="Beinhauer J.D."/>
            <person name="Boskovic J."/>
            <person name="Buitrago M.J."/>
            <person name="Bussereau F."/>
            <person name="Coster F."/>
            <person name="Crouzet M."/>
            <person name="D'Angelo M."/>
            <person name="Dal Pero F."/>
            <person name="De Antoni A."/>
            <person name="del Rey F."/>
            <person name="Doignon F."/>
            <person name="Domdey H."/>
            <person name="Dubois E."/>
            <person name="Fiedler T.A."/>
            <person name="Fleig U."/>
            <person name="Floeth M."/>
            <person name="Fritz C."/>
            <person name="Gaillardin C."/>
            <person name="Garcia-Cantalejo J.M."/>
            <person name="Glansdorff N."/>
            <person name="Goffeau A."/>
            <person name="Gueldener U."/>
            <person name="Herbert C.J."/>
            <person name="Heumann K."/>
            <person name="Heuss-Neitzel D."/>
            <person name="Hilbert H."/>
            <person name="Hinni K."/>
            <person name="Iraqui Houssaini I."/>
            <person name="Jacquet M."/>
            <person name="Jimenez A."/>
            <person name="Jonniaux J.-L."/>
            <person name="Karpfinger-Hartl L."/>
            <person name="Lanfranchi G."/>
            <person name="Lepingle A."/>
            <person name="Levesque H."/>
            <person name="Lyck R."/>
            <person name="Maftahi M."/>
            <person name="Mallet L."/>
            <person name="Maurer C.T.C."/>
            <person name="Messenguy F."/>
            <person name="Mewes H.-W."/>
            <person name="Moestl D."/>
            <person name="Nasr F."/>
            <person name="Nicaud J.-M."/>
            <person name="Niedenthal R.K."/>
            <person name="Pandolfo D."/>
            <person name="Pierard A."/>
            <person name="Piravandi E."/>
            <person name="Planta R.J."/>
            <person name="Pohl T.M."/>
            <person name="Purnelle B."/>
            <person name="Rebischung C."/>
            <person name="Remacha M.A."/>
            <person name="Revuelta J.L."/>
            <person name="Rinke M."/>
            <person name="Saiz J.E."/>
            <person name="Sartorello F."/>
            <person name="Scherens B."/>
            <person name="Sen-Gupta M."/>
            <person name="Soler-Mira A."/>
            <person name="Urbanus J.H.M."/>
            <person name="Valle G."/>
            <person name="Van Dyck L."/>
            <person name="Verhasselt P."/>
            <person name="Vierendeels F."/>
            <person name="Vissers S."/>
            <person name="Voet M."/>
            <person name="Volckaert G."/>
            <person name="Wach A."/>
            <person name="Wambutt R."/>
            <person name="Wedler H."/>
            <person name="Zollner A."/>
            <person name="Hani J."/>
        </authorList>
    </citation>
    <scope>NUCLEOTIDE SEQUENCE [LARGE SCALE GENOMIC DNA]</scope>
    <source>
        <strain>ATCC 204508 / S288c</strain>
    </source>
</reference>
<reference key="3">
    <citation type="journal article" date="2014" name="G3 (Bethesda)">
        <title>The reference genome sequence of Saccharomyces cerevisiae: Then and now.</title>
        <authorList>
            <person name="Engel S.R."/>
            <person name="Dietrich F.S."/>
            <person name="Fisk D.G."/>
            <person name="Binkley G."/>
            <person name="Balakrishnan R."/>
            <person name="Costanzo M.C."/>
            <person name="Dwight S.S."/>
            <person name="Hitz B.C."/>
            <person name="Karra K."/>
            <person name="Nash R.S."/>
            <person name="Weng S."/>
            <person name="Wong E.D."/>
            <person name="Lloyd P."/>
            <person name="Skrzypek M.S."/>
            <person name="Miyasato S.R."/>
            <person name="Simison M."/>
            <person name="Cherry J.M."/>
        </authorList>
    </citation>
    <scope>GENOME REANNOTATION</scope>
    <source>
        <strain>ATCC 204508 / S288c</strain>
    </source>
</reference>
<reference key="4">
    <citation type="journal article" date="1983" name="J. Bacteriol.">
        <title>Isolation and characterization of aminopeptidase mutants of Saccharomyces cerevisiae.</title>
        <authorList>
            <person name="Trumbly R.J."/>
            <person name="Bradley G."/>
        </authorList>
    </citation>
    <scope>CATALYTIC ACTIVITY</scope>
    <scope>SUBSTRATE SPECIFICITY</scope>
</reference>
<reference key="5">
    <citation type="journal article" date="1999" name="J. Biol. Chem.">
        <title>Cloning and characterization of a bifunctional leukotriene A(4) hydrolase from Saccharomyces cerevisiae.</title>
        <authorList>
            <person name="Kull F."/>
            <person name="Ohlson E."/>
            <person name="Haeggstroem J.Z."/>
        </authorList>
    </citation>
    <scope>FUNCTION</scope>
    <scope>BIOPHYSICOCHEMICAL PROPERTIES</scope>
    <scope>ACTIVITY REGULATION</scope>
</reference>
<reference key="6">
    <citation type="journal article" date="2001" name="Biochemistry">
        <title>Saccharomyces cerevisiae leukotriene A4 hydrolase: formation of leukotriene B4 and identification of catalytic residues.</title>
        <authorList>
            <person name="Kull F."/>
            <person name="Ohlson E."/>
            <person name="Lind B."/>
            <person name="Haeggstroem J.Z."/>
        </authorList>
    </citation>
    <scope>FUNCTION</scope>
    <scope>BIOPHYSICOCHEMICAL PROPERTIES</scope>
    <scope>MUTAGENESIS OF HIS-340; GLU-341; HIS-344; GLU-363; PHE-424 AND TYR-429</scope>
</reference>
<reference key="7">
    <citation type="journal article" date="2003" name="Acta Crystallogr. D">
        <title>Crystallization and X-ray diffraction data analysis of leukotriene A4 hydrolase from Saccharomyces cerevisiae.</title>
        <authorList>
            <person name="Andersson B."/>
            <person name="Kull F."/>
            <person name="Haeggstroem J.Z."/>
            <person name="Thunnissen M.M.G.M."/>
        </authorList>
    </citation>
    <scope>CRYSTALLIZATION</scope>
</reference>
<reference key="8">
    <citation type="journal article" date="2003" name="Nature">
        <title>Global analysis of protein localization in budding yeast.</title>
        <authorList>
            <person name="Huh W.-K."/>
            <person name="Falvo J.V."/>
            <person name="Gerke L.C."/>
            <person name="Carroll A.S."/>
            <person name="Howson R.W."/>
            <person name="Weissman J.S."/>
            <person name="O'Shea E.K."/>
        </authorList>
    </citation>
    <scope>SUBCELLULAR LOCATION [LARGE SCALE ANALYSIS]</scope>
</reference>
<reference key="9">
    <citation type="journal article" date="2003" name="Nature">
        <title>Global analysis of protein expression in yeast.</title>
        <authorList>
            <person name="Ghaemmaghami S."/>
            <person name="Huh W.-K."/>
            <person name="Bower K."/>
            <person name="Howson R.W."/>
            <person name="Belle A."/>
            <person name="Dephoure N."/>
            <person name="O'Shea E.K."/>
            <person name="Weissman J.S."/>
        </authorList>
    </citation>
    <scope>LEVEL OF PROTEIN EXPRESSION [LARGE SCALE ANALYSIS]</scope>
</reference>
<reference key="10">
    <citation type="journal article" date="2005" name="J. Biol. Chem.">
        <title>Leukotriene A4 hydrolase, insights into the molecular evolution by homology modeling and mutational analysis of enzyme from Saccharomyces cerevisiae.</title>
        <authorList>
            <person name="Tholander F."/>
            <person name="Kull F."/>
            <person name="Ohlson E."/>
            <person name="Shafqat J."/>
            <person name="Thunnissen M.M.G.M."/>
            <person name="Haeggstroem J.Z."/>
        </authorList>
    </citation>
    <scope>FUNCTION</scope>
    <scope>ACTIVITY REGULATION</scope>
    <scope>MUTAGENESIS</scope>
</reference>
<reference key="11">
    <citation type="journal article" date="2006" name="Peptides">
        <title>A conserved tyrosine residue of Saccharomyces cerevisiae leukotriene A4 hydrolase stabilizes the transition state of the peptidase activity.</title>
        <authorList>
            <person name="Thompson M.W."/>
            <person name="Archer E.D."/>
            <person name="Romer C.E."/>
            <person name="Seipelt R.L."/>
        </authorList>
    </citation>
    <scope>FUNCTION</scope>
    <scope>BIOPHYSICOCHEMICAL PROPERTIES</scope>
    <scope>MUTAGENESIS OF TYR-244</scope>
</reference>
<reference key="12">
    <citation type="journal article" date="2011" name="J. Mol. Biol.">
        <title>A leukotriene A4 hydrolase-related aminopeptidase from yeast undergoes induced fit upon inhibitor binding.</title>
        <authorList>
            <person name="Helgstrand C."/>
            <person name="Hasan M."/>
            <person name="Uysal H."/>
            <person name="Haeggstrom J.Z."/>
            <person name="Thunnissen M.M."/>
        </authorList>
    </citation>
    <scope>X-RAY CRYSTALLOGRAPHY (1.96 ANGSTROMS) OF 40-669 IN COMPLEX WITH ZINC IONS AND BESTATIN</scope>
    <scope>CATALYTIC ACTIVITY</scope>
    <scope>FUNCTION</scope>
    <scope>COFACTOR</scope>
</reference>
<organism>
    <name type="scientific">Saccharomyces cerevisiae (strain ATCC 204508 / S288c)</name>
    <name type="common">Baker's yeast</name>
    <dbReference type="NCBI Taxonomy" id="559292"/>
    <lineage>
        <taxon>Eukaryota</taxon>
        <taxon>Fungi</taxon>
        <taxon>Dikarya</taxon>
        <taxon>Ascomycota</taxon>
        <taxon>Saccharomycotina</taxon>
        <taxon>Saccharomycetes</taxon>
        <taxon>Saccharomycetales</taxon>
        <taxon>Saccharomycetaceae</taxon>
        <taxon>Saccharomyces</taxon>
    </lineage>
</organism>
<sequence>MFLLPFVIRHSSSIYLPTLRFRGLLTVISRNIHISTPHKMLPLSIEQRRPSRSPEYDQSTLSNYKDFAVLHTDLNLSVSFEKSAISGSVTFQLKKLHEGKNKSDELHLDTSYLDVQEVHIDGSKADFQIEQRKEPLGSRLVINNASCNDNFTLNIQFRTTDKCTALQWLNSKQTKGGKPYVFSQLEAIHARSLFPCFDTPSVKSTFTASIESPLPVVFSGIRIEDTSKDTNIYRFEQKVPIPAYLIGIASGDLSSAPIGPRSTVYTEPFRLKDCQWEFENDVEKFIQTAEKIIFEYEWGTYDILVNVDSYPYGGMESPNMTFATPTLIAHDRSNIDVIAHELAHSWSGNLVTNCSWNHFWLNEGWTVYLERRIIGAIHGEPTRHFSALIGWSDLQNSIDSMKDPERFSTLVQNLNDNTDPDDAFSTVPYEKGFNLLFHLETILGGKAEFDPFIRHYFKKFAKKSLDTFQFLDTLYEFYPEKKEILDSVDWETWLYKPGMPPRPHFITALADNVYQLADKWVEMAQHLKTTEDFRSEFNAIDIKDFNSNQLVLFLETLTQNGHSNKKPKDFDWAKFPVASRALLDIYQDNIVKSQNAEVVFKMFKFQIFAKLQEEYKHLADWLGTVGRMKFVRPGYRLLNSVDRRLALATFDKFKDTYHPICKALVKQDLGL</sequence>
<keyword id="KW-0002">3D-structure</keyword>
<keyword id="KW-0963">Cytoplasm</keyword>
<keyword id="KW-0378">Hydrolase</keyword>
<keyword id="KW-0479">Metal-binding</keyword>
<keyword id="KW-0482">Metalloprotease</keyword>
<keyword id="KW-0539">Nucleus</keyword>
<keyword id="KW-0645">Protease</keyword>
<keyword id="KW-1185">Reference proteome</keyword>
<keyword id="KW-0862">Zinc</keyword>
<gene>
    <name evidence="9" type="primary">LAP2</name>
    <name type="ordered locus">YNL045W</name>
    <name type="ORF">N2535</name>
</gene>
<proteinExistence type="evidence at protein level"/>
<comment type="function">
    <text evidence="1 2 5 6 7 8">Aminopeptidase that preferentially cleaves di- and tripeptides. Also has low epoxide hydrolase activity (in vitro). Can hydrolyze the epoxide leukotriene LTA(4) but it forms preferentially 5,6-dihydroxy-7,9,11,14-eicosatetraenoic acid rather than the cytokine leukotriene B(4) as the product compared to the homologous mammalian enzyme (in vitro).</text>
</comment>
<comment type="catalytic activity">
    <reaction evidence="7">
        <text>an epoxide + H2O = an ethanediol</text>
        <dbReference type="Rhea" id="RHEA:19037"/>
        <dbReference type="ChEBI" id="CHEBI:15377"/>
        <dbReference type="ChEBI" id="CHEBI:32955"/>
        <dbReference type="ChEBI" id="CHEBI:140594"/>
        <dbReference type="EC" id="3.3.2.10"/>
    </reaction>
</comment>
<comment type="cofactor">
    <cofactor evidence="7">
        <name>Zn(2+)</name>
        <dbReference type="ChEBI" id="CHEBI:29105"/>
    </cofactor>
    <text evidence="7">Binds 1 zinc ion per subunit.</text>
</comment>
<comment type="activity regulation">
    <text evidence="1 5">Inhibited by 3-(4-benzyloxyphenyl)-2-(R)-amino-1-propanethiol (thioamine) and N-hydroxy-N-(2-(S)-amino-3-(4-benzyloxyphenyl)propyl)-5-carboxypen-tanamide (hydroxamic acid). The aminopeptidase activity is stimulated by LTA(4).</text>
</comment>
<comment type="biophysicochemical properties">
    <kinetics>
        <KM evidence="1 2 6">1.5 mM for Leu-p-nitroanilide</KM>
        <KM evidence="1 2 6">1.8 mM for Met-p-nitroanilide</KM>
        <KM evidence="1 2 6">2 mM for Ala-p-nitroanilide</KM>
        <Vmax evidence="1 2 6">520.0 nmol/min/mg enzyme with Leu-p-nitroanilide as substrate</Vmax>
        <Vmax evidence="1 2 6">360.0 nmol/min/mg enzyme with Met-p-nitroanilide as substrate</Vmax>
        <Vmax evidence="1 2 6">170.0 nmol/min/mg enzyme with Ala-p-nitroanilide as substrate</Vmax>
    </kinetics>
    <phDependence>
        <text evidence="1 2 6">Optimum pH is about 7.3.</text>
    </phDependence>
</comment>
<comment type="subcellular location">
    <subcellularLocation>
        <location evidence="3">Cytoplasm</location>
    </subcellularLocation>
    <subcellularLocation>
        <location evidence="3">Nucleus</location>
    </subcellularLocation>
</comment>
<comment type="miscellaneous">
    <text evidence="4">Present with 5590 molecules/cell in log phase SD medium.</text>
</comment>
<comment type="similarity">
    <text evidence="11">Belongs to the peptidase M1 family.</text>
</comment>
<dbReference type="EC" id="3.4.11.-" evidence="8"/>
<dbReference type="EC" id="3.3.2.10" evidence="7"/>
<dbReference type="EMBL" id="X94547">
    <property type="protein sequence ID" value="CAA64237.1"/>
    <property type="molecule type" value="Genomic_DNA"/>
</dbReference>
<dbReference type="EMBL" id="Z71321">
    <property type="protein sequence ID" value="CAA95912.1"/>
    <property type="molecule type" value="Genomic_DNA"/>
</dbReference>
<dbReference type="EMBL" id="BK006947">
    <property type="protein sequence ID" value="DAA10500.1"/>
    <property type="molecule type" value="Genomic_DNA"/>
</dbReference>
<dbReference type="PIR" id="S61099">
    <property type="entry name" value="S61099"/>
</dbReference>
<dbReference type="RefSeq" id="NP_014353.1">
    <property type="nucleotide sequence ID" value="NM_001182884.1"/>
</dbReference>
<dbReference type="PDB" id="2XPY">
    <property type="method" value="X-ray"/>
    <property type="resolution" value="2.73 A"/>
    <property type="chains" value="A=40-671"/>
</dbReference>
<dbReference type="PDB" id="2XPZ">
    <property type="method" value="X-ray"/>
    <property type="resolution" value="2.30 A"/>
    <property type="chains" value="A=40-671"/>
</dbReference>
<dbReference type="PDB" id="2XQ0">
    <property type="method" value="X-ray"/>
    <property type="resolution" value="1.96 A"/>
    <property type="chains" value="A=40-669"/>
</dbReference>
<dbReference type="PDBsum" id="2XPY"/>
<dbReference type="PDBsum" id="2XPZ"/>
<dbReference type="PDBsum" id="2XQ0"/>
<dbReference type="SMR" id="Q10740"/>
<dbReference type="BioGRID" id="35779">
    <property type="interactions" value="89"/>
</dbReference>
<dbReference type="DIP" id="DIP-4371N"/>
<dbReference type="FunCoup" id="Q10740">
    <property type="interactions" value="1312"/>
</dbReference>
<dbReference type="IntAct" id="Q10740">
    <property type="interactions" value="6"/>
</dbReference>
<dbReference type="MINT" id="Q10740"/>
<dbReference type="STRING" id="4932.YNL045W"/>
<dbReference type="MEROPS" id="M01.034"/>
<dbReference type="iPTMnet" id="Q10740"/>
<dbReference type="PaxDb" id="4932-YNL045W"/>
<dbReference type="PeptideAtlas" id="Q10740"/>
<dbReference type="EnsemblFungi" id="YNL045W_mRNA">
    <property type="protein sequence ID" value="YNL045W"/>
    <property type="gene ID" value="YNL045W"/>
</dbReference>
<dbReference type="GeneID" id="855682"/>
<dbReference type="KEGG" id="sce:YNL045W"/>
<dbReference type="AGR" id="SGD:S000004990"/>
<dbReference type="SGD" id="S000004990">
    <property type="gene designation" value="LAP2"/>
</dbReference>
<dbReference type="VEuPathDB" id="FungiDB:YNL045W"/>
<dbReference type="eggNOG" id="KOG1047">
    <property type="taxonomic scope" value="Eukaryota"/>
</dbReference>
<dbReference type="GeneTree" id="ENSGT00940000156375"/>
<dbReference type="HOGENOM" id="CLU_014505_1_1_1"/>
<dbReference type="InParanoid" id="Q10740"/>
<dbReference type="OMA" id="CTALQWM"/>
<dbReference type="OrthoDB" id="79562at2759"/>
<dbReference type="BioCyc" id="YEAST:YNL045W-MONOMER"/>
<dbReference type="Reactome" id="R-SCE-2142691">
    <property type="pathway name" value="Synthesis of Leukotrienes (LT) and Eoxins (EX)"/>
</dbReference>
<dbReference type="Reactome" id="R-SCE-6798695">
    <property type="pathway name" value="Neutrophil degranulation"/>
</dbReference>
<dbReference type="Reactome" id="R-SCE-9018676">
    <property type="pathway name" value="Biosynthesis of D-series resolvins"/>
</dbReference>
<dbReference type="Reactome" id="R-SCE-9018681">
    <property type="pathway name" value="Biosynthesis of protectins"/>
</dbReference>
<dbReference type="Reactome" id="R-SCE-9018896">
    <property type="pathway name" value="Biosynthesis of E-series 18(S)-resolvins"/>
</dbReference>
<dbReference type="Reactome" id="R-SCE-9020265">
    <property type="pathway name" value="Biosynthesis of aspirin-triggered D-series resolvins"/>
</dbReference>
<dbReference type="Reactome" id="R-SCE-9023661">
    <property type="pathway name" value="Biosynthesis of E-series 18(R)-resolvins"/>
</dbReference>
<dbReference type="SABIO-RK" id="Q10740"/>
<dbReference type="BioGRID-ORCS" id="855682">
    <property type="hits" value="4 hits in 10 CRISPR screens"/>
</dbReference>
<dbReference type="EvolutionaryTrace" id="Q10740"/>
<dbReference type="PRO" id="PR:Q10740"/>
<dbReference type="Proteomes" id="UP000002311">
    <property type="component" value="Chromosome XIV"/>
</dbReference>
<dbReference type="RNAct" id="Q10740">
    <property type="molecule type" value="protein"/>
</dbReference>
<dbReference type="GO" id="GO:0005737">
    <property type="term" value="C:cytoplasm"/>
    <property type="evidence" value="ECO:0007005"/>
    <property type="project" value="SGD"/>
</dbReference>
<dbReference type="GO" id="GO:0005829">
    <property type="term" value="C:cytosol"/>
    <property type="evidence" value="ECO:0000318"/>
    <property type="project" value="GO_Central"/>
</dbReference>
<dbReference type="GO" id="GO:0005634">
    <property type="term" value="C:nucleus"/>
    <property type="evidence" value="ECO:0007005"/>
    <property type="project" value="SGD"/>
</dbReference>
<dbReference type="GO" id="GO:0004177">
    <property type="term" value="F:aminopeptidase activity"/>
    <property type="evidence" value="ECO:0000314"/>
    <property type="project" value="SGD"/>
</dbReference>
<dbReference type="GO" id="GO:0004301">
    <property type="term" value="F:epoxide hydrolase activity"/>
    <property type="evidence" value="ECO:0000314"/>
    <property type="project" value="SGD"/>
</dbReference>
<dbReference type="GO" id="GO:0008237">
    <property type="term" value="F:metallopeptidase activity"/>
    <property type="evidence" value="ECO:0007669"/>
    <property type="project" value="UniProtKB-KW"/>
</dbReference>
<dbReference type="GO" id="GO:0008270">
    <property type="term" value="F:zinc ion binding"/>
    <property type="evidence" value="ECO:0000250"/>
    <property type="project" value="UniProtKB"/>
</dbReference>
<dbReference type="GO" id="GO:0006629">
    <property type="term" value="P:lipid metabolic process"/>
    <property type="evidence" value="ECO:0000314"/>
    <property type="project" value="SGD"/>
</dbReference>
<dbReference type="GO" id="GO:0043171">
    <property type="term" value="P:peptide catabolic process"/>
    <property type="evidence" value="ECO:0000250"/>
    <property type="project" value="UniProtKB"/>
</dbReference>
<dbReference type="GO" id="GO:0030163">
    <property type="term" value="P:protein catabolic process"/>
    <property type="evidence" value="ECO:0000314"/>
    <property type="project" value="SGD"/>
</dbReference>
<dbReference type="GO" id="GO:0006508">
    <property type="term" value="P:proteolysis"/>
    <property type="evidence" value="ECO:0007669"/>
    <property type="project" value="UniProtKB-KW"/>
</dbReference>
<dbReference type="CDD" id="cd09599">
    <property type="entry name" value="M1_LTA4H"/>
    <property type="match status" value="1"/>
</dbReference>
<dbReference type="FunFam" id="1.10.390.10:FF:000009">
    <property type="entry name" value="Leukotriene A(4) hydrolase"/>
    <property type="match status" value="1"/>
</dbReference>
<dbReference type="FunFam" id="1.25.40.320:FF:000001">
    <property type="entry name" value="Leukotriene A(4) hydrolase"/>
    <property type="match status" value="1"/>
</dbReference>
<dbReference type="FunFam" id="2.60.40.1730:FF:000004">
    <property type="entry name" value="Leukotriene A(4) hydrolase"/>
    <property type="match status" value="1"/>
</dbReference>
<dbReference type="FunFam" id="3.30.2010.30:FF:000001">
    <property type="entry name" value="Leukotriene A(4) hydrolase"/>
    <property type="match status" value="1"/>
</dbReference>
<dbReference type="Gene3D" id="3.30.2010.30">
    <property type="match status" value="1"/>
</dbReference>
<dbReference type="Gene3D" id="1.10.390.10">
    <property type="entry name" value="Neutral Protease Domain 2"/>
    <property type="match status" value="1"/>
</dbReference>
<dbReference type="Gene3D" id="1.25.40.320">
    <property type="entry name" value="Peptidase M1, leukotriene A4 hydrolase/aminopeptidase C-terminal domain"/>
    <property type="match status" value="1"/>
</dbReference>
<dbReference type="Gene3D" id="2.60.40.1730">
    <property type="entry name" value="tricorn interacting facor f3 domain"/>
    <property type="match status" value="1"/>
</dbReference>
<dbReference type="InterPro" id="IPR045357">
    <property type="entry name" value="Aminopeptidase_N-like_N"/>
</dbReference>
<dbReference type="InterPro" id="IPR042097">
    <property type="entry name" value="Aminopeptidase_N-like_N_sf"/>
</dbReference>
<dbReference type="InterPro" id="IPR016024">
    <property type="entry name" value="ARM-type_fold"/>
</dbReference>
<dbReference type="InterPro" id="IPR012777">
    <property type="entry name" value="LTA4H"/>
</dbReference>
<dbReference type="InterPro" id="IPR049980">
    <property type="entry name" value="LTA4H_cat"/>
</dbReference>
<dbReference type="InterPro" id="IPR038502">
    <property type="entry name" value="M1_LTA-4_hydro/amino_C_sf"/>
</dbReference>
<dbReference type="InterPro" id="IPR034015">
    <property type="entry name" value="M1_LTA4H"/>
</dbReference>
<dbReference type="InterPro" id="IPR001930">
    <property type="entry name" value="Peptidase_M1"/>
</dbReference>
<dbReference type="InterPro" id="IPR015211">
    <property type="entry name" value="Peptidase_M1_C"/>
</dbReference>
<dbReference type="InterPro" id="IPR014782">
    <property type="entry name" value="Peptidase_M1_dom"/>
</dbReference>
<dbReference type="InterPro" id="IPR027268">
    <property type="entry name" value="Peptidase_M4/M1_CTD_sf"/>
</dbReference>
<dbReference type="NCBIfam" id="TIGR02411">
    <property type="entry name" value="leuko_A4_hydro"/>
    <property type="match status" value="1"/>
</dbReference>
<dbReference type="PANTHER" id="PTHR45726">
    <property type="entry name" value="LEUKOTRIENE A-4 HYDROLASE"/>
    <property type="match status" value="1"/>
</dbReference>
<dbReference type="PANTHER" id="PTHR45726:SF3">
    <property type="entry name" value="LEUKOTRIENE A-4 HYDROLASE"/>
    <property type="match status" value="1"/>
</dbReference>
<dbReference type="Pfam" id="PF09127">
    <property type="entry name" value="Leuk-A4-hydro_C"/>
    <property type="match status" value="1"/>
</dbReference>
<dbReference type="Pfam" id="PF01433">
    <property type="entry name" value="Peptidase_M1"/>
    <property type="match status" value="1"/>
</dbReference>
<dbReference type="Pfam" id="PF17900">
    <property type="entry name" value="Peptidase_M1_N"/>
    <property type="match status" value="1"/>
</dbReference>
<dbReference type="PRINTS" id="PR00756">
    <property type="entry name" value="ALADIPTASE"/>
</dbReference>
<dbReference type="SMART" id="SM01263">
    <property type="entry name" value="Leuk-A4-hydro_C"/>
    <property type="match status" value="1"/>
</dbReference>
<dbReference type="SUPFAM" id="SSF48371">
    <property type="entry name" value="ARM repeat"/>
    <property type="match status" value="1"/>
</dbReference>
<dbReference type="SUPFAM" id="SSF63737">
    <property type="entry name" value="Leukotriene A4 hydrolase N-terminal domain"/>
    <property type="match status" value="1"/>
</dbReference>
<dbReference type="SUPFAM" id="SSF55486">
    <property type="entry name" value="Metalloproteases ('zincins'), catalytic domain"/>
    <property type="match status" value="1"/>
</dbReference>
<dbReference type="PROSITE" id="PS00142">
    <property type="entry name" value="ZINC_PROTEASE"/>
    <property type="match status" value="1"/>
</dbReference>
<evidence type="ECO:0000269" key="1">
    <source>
    </source>
</evidence>
<evidence type="ECO:0000269" key="2">
    <source>
    </source>
</evidence>
<evidence type="ECO:0000269" key="3">
    <source>
    </source>
</evidence>
<evidence type="ECO:0000269" key="4">
    <source>
    </source>
</evidence>
<evidence type="ECO:0000269" key="5">
    <source>
    </source>
</evidence>
<evidence type="ECO:0000269" key="6">
    <source>
    </source>
</evidence>
<evidence type="ECO:0000269" key="7">
    <source>
    </source>
</evidence>
<evidence type="ECO:0000269" key="8">
    <source>
    </source>
</evidence>
<evidence type="ECO:0000303" key="9">
    <source>
    </source>
</evidence>
<evidence type="ECO:0000303" key="10">
    <source>
    </source>
</evidence>
<evidence type="ECO:0000305" key="11"/>
<evidence type="ECO:0000305" key="12">
    <source>
    </source>
</evidence>
<evidence type="ECO:0007829" key="13">
    <source>
        <dbReference type="PDB" id="2XPY"/>
    </source>
</evidence>
<evidence type="ECO:0007829" key="14">
    <source>
        <dbReference type="PDB" id="2XPZ"/>
    </source>
</evidence>
<evidence type="ECO:0007829" key="15">
    <source>
        <dbReference type="PDB" id="2XQ0"/>
    </source>
</evidence>
<feature type="chain" id="PRO_0000095129" description="Leucine aminopeptidase 2">
    <location>
        <begin position="1"/>
        <end position="671"/>
    </location>
</feature>
<feature type="active site" description="Proton acceptor">
    <location>
        <position position="341"/>
    </location>
</feature>
<feature type="active site" description="Proton donor">
    <location>
        <position position="429"/>
    </location>
</feature>
<feature type="binding site">
    <location>
        <begin position="184"/>
        <end position="186"/>
    </location>
    <ligand>
        <name>substrate</name>
    </ligand>
</feature>
<feature type="binding site">
    <location>
        <begin position="311"/>
        <end position="316"/>
    </location>
    <ligand>
        <name>substrate</name>
    </ligand>
</feature>
<feature type="binding site">
    <location>
        <position position="340"/>
    </location>
    <ligand>
        <name>Zn(2+)</name>
        <dbReference type="ChEBI" id="CHEBI:29105"/>
        <note>catalytic</note>
    </ligand>
</feature>
<feature type="binding site">
    <location>
        <position position="344"/>
    </location>
    <ligand>
        <name>Zn(2+)</name>
        <dbReference type="ChEBI" id="CHEBI:29105"/>
        <note>catalytic</note>
    </ligand>
</feature>
<feature type="binding site">
    <location>
        <position position="363"/>
    </location>
    <ligand>
        <name>Zn(2+)</name>
        <dbReference type="ChEBI" id="CHEBI:29105"/>
        <note>catalytic</note>
    </ligand>
</feature>
<feature type="mutagenesis site" description="Strongly reduces the substrate affinity." evidence="6">
    <original>Y</original>
    <variation>F</variation>
    <location>
        <position position="244"/>
    </location>
</feature>
<feature type="mutagenesis site" description="Abolishes the aminopeptidase activity." evidence="5">
    <original>E</original>
    <variation>A</variation>
    <variation>Q</variation>
    <variation>D</variation>
    <location>
        <position position="316"/>
    </location>
</feature>
<feature type="mutagenesis site" description="Abolishes the epoxide hydrolase and aminopeptidase activities." evidence="2">
    <original>H</original>
    <variation>Q</variation>
    <location>
        <position position="340"/>
    </location>
</feature>
<feature type="mutagenesis site" description="Abolishes aminopeptidase activity. No effect on the epoxide hydrolase activity." evidence="2">
    <original>E</original>
    <variation>Q</variation>
    <location>
        <position position="341"/>
    </location>
</feature>
<feature type="mutagenesis site" description="Abolishes the epoxide hydrolase and aminopeptidase activities." evidence="2">
    <original>H</original>
    <variation>Q</variation>
    <location>
        <position position="344"/>
    </location>
</feature>
<feature type="mutagenesis site" description="Abolishes the epoxide hydrolase activity." evidence="2">
    <original>E</original>
    <variation>Q</variation>
    <location>
        <position position="363"/>
    </location>
</feature>
<feature type="mutagenesis site" description="Increases the aminopeptidase activity and decreases the epoxide hydrolase activity." evidence="2">
    <original>F</original>
    <variation>Y</variation>
    <location>
        <position position="424"/>
    </location>
</feature>
<feature type="mutagenesis site" description="Abolishes the aminopeptidase activity and decreases the epoxide hydrolase activity." evidence="2">
    <original>Y</original>
    <variation>F</variation>
    <location>
        <position position="429"/>
    </location>
</feature>
<feature type="mutagenesis site" description="Abolishes the aminopeptidase activity." evidence="5">
    <original>R</original>
    <variation>K</variation>
    <variation>A</variation>
    <location>
        <position position="627"/>
    </location>
</feature>
<feature type="helix" evidence="15">
    <location>
        <begin position="43"/>
        <end position="48"/>
    </location>
</feature>
<feature type="strand" evidence="15">
    <location>
        <begin position="51"/>
        <end position="54"/>
    </location>
</feature>
<feature type="helix" evidence="15">
    <location>
        <begin position="64"/>
        <end position="66"/>
    </location>
</feature>
<feature type="strand" evidence="15">
    <location>
        <begin position="67"/>
        <end position="79"/>
    </location>
</feature>
<feature type="turn" evidence="15">
    <location>
        <begin position="80"/>
        <end position="83"/>
    </location>
</feature>
<feature type="strand" evidence="15">
    <location>
        <begin position="84"/>
        <end position="95"/>
    </location>
</feature>
<feature type="strand" evidence="13">
    <location>
        <begin position="99"/>
        <end position="101"/>
    </location>
</feature>
<feature type="strand" evidence="15">
    <location>
        <begin position="105"/>
        <end position="109"/>
    </location>
</feature>
<feature type="strand" evidence="15">
    <location>
        <begin position="111"/>
        <end position="120"/>
    </location>
</feature>
<feature type="strand" evidence="15">
    <location>
        <begin position="127"/>
        <end position="129"/>
    </location>
</feature>
<feature type="turn" evidence="15">
    <location>
        <begin position="134"/>
        <end position="136"/>
    </location>
</feature>
<feature type="strand" evidence="15">
    <location>
        <begin position="140"/>
        <end position="143"/>
    </location>
</feature>
<feature type="strand" evidence="15">
    <location>
        <begin position="147"/>
        <end position="159"/>
    </location>
</feature>
<feature type="strand" evidence="15">
    <location>
        <begin position="164"/>
        <end position="169"/>
    </location>
</feature>
<feature type="turn" evidence="15">
    <location>
        <begin position="171"/>
        <end position="173"/>
    </location>
</feature>
<feature type="strand" evidence="13">
    <location>
        <begin position="175"/>
        <end position="178"/>
    </location>
</feature>
<feature type="strand" evidence="15">
    <location>
        <begin position="180"/>
        <end position="183"/>
    </location>
</feature>
<feature type="turn" evidence="15">
    <location>
        <begin position="186"/>
        <end position="189"/>
    </location>
</feature>
<feature type="helix" evidence="15">
    <location>
        <begin position="190"/>
        <end position="192"/>
    </location>
</feature>
<feature type="strand" evidence="15">
    <location>
        <begin position="204"/>
        <end position="211"/>
    </location>
</feature>
<feature type="strand" evidence="15">
    <location>
        <begin position="216"/>
        <end position="222"/>
    </location>
</feature>
<feature type="strand" evidence="15">
    <location>
        <begin position="232"/>
        <end position="241"/>
    </location>
</feature>
<feature type="helix" evidence="15">
    <location>
        <begin position="243"/>
        <end position="245"/>
    </location>
</feature>
<feature type="strand" evidence="15">
    <location>
        <begin position="248"/>
        <end position="252"/>
    </location>
</feature>
<feature type="strand" evidence="15">
    <location>
        <begin position="254"/>
        <end position="259"/>
    </location>
</feature>
<feature type="strand" evidence="15">
    <location>
        <begin position="262"/>
        <end position="266"/>
    </location>
</feature>
<feature type="helix" evidence="15">
    <location>
        <begin position="268"/>
        <end position="278"/>
    </location>
</feature>
<feature type="turn" evidence="15">
    <location>
        <begin position="279"/>
        <end position="281"/>
    </location>
</feature>
<feature type="helix" evidence="15">
    <location>
        <begin position="282"/>
        <end position="292"/>
    </location>
</feature>
<feature type="strand" evidence="14">
    <location>
        <begin position="297"/>
        <end position="299"/>
    </location>
</feature>
<feature type="strand" evidence="15">
    <location>
        <begin position="303"/>
        <end position="305"/>
    </location>
</feature>
<feature type="strand" evidence="15">
    <location>
        <begin position="312"/>
        <end position="315"/>
    </location>
</feature>
<feature type="strand" evidence="15">
    <location>
        <begin position="321"/>
        <end position="323"/>
    </location>
</feature>
<feature type="helix" evidence="15">
    <location>
        <begin position="325"/>
        <end position="327"/>
    </location>
</feature>
<feature type="strand" evidence="15">
    <location>
        <begin position="330"/>
        <end position="332"/>
    </location>
</feature>
<feature type="helix" evidence="15">
    <location>
        <begin position="336"/>
        <end position="344"/>
    </location>
</feature>
<feature type="turn" evidence="15">
    <location>
        <begin position="348"/>
        <end position="350"/>
    </location>
</feature>
<feature type="strand" evidence="15">
    <location>
        <begin position="351"/>
        <end position="355"/>
    </location>
</feature>
<feature type="helix" evidence="15">
    <location>
        <begin position="356"/>
        <end position="359"/>
    </location>
</feature>
<feature type="helix" evidence="15">
    <location>
        <begin position="360"/>
        <end position="378"/>
    </location>
</feature>
<feature type="helix" evidence="15">
    <location>
        <begin position="380"/>
        <end position="399"/>
    </location>
</feature>
<feature type="strand" evidence="14">
    <location>
        <begin position="401"/>
        <end position="403"/>
    </location>
</feature>
<feature type="helix" evidence="15">
    <location>
        <begin position="404"/>
        <end position="407"/>
    </location>
</feature>
<feature type="strand" evidence="15">
    <location>
        <begin position="409"/>
        <end position="411"/>
    </location>
</feature>
<feature type="strand" evidence="15">
    <location>
        <begin position="416"/>
        <end position="418"/>
    </location>
</feature>
<feature type="helix" evidence="15">
    <location>
        <begin position="420"/>
        <end position="423"/>
    </location>
</feature>
<feature type="helix" evidence="15">
    <location>
        <begin position="427"/>
        <end position="442"/>
    </location>
</feature>
<feature type="helix" evidence="15">
    <location>
        <begin position="446"/>
        <end position="459"/>
    </location>
</feature>
<feature type="turn" evidence="15">
    <location>
        <begin position="460"/>
        <end position="462"/>
    </location>
</feature>
<feature type="strand" evidence="15">
    <location>
        <begin position="463"/>
        <end position="465"/>
    </location>
</feature>
<feature type="helix" evidence="15">
    <location>
        <begin position="467"/>
        <end position="477"/>
    </location>
</feature>
<feature type="helix" evidence="15">
    <location>
        <begin position="479"/>
        <end position="481"/>
    </location>
</feature>
<feature type="helix" evidence="15">
    <location>
        <begin position="482"/>
        <end position="486"/>
    </location>
</feature>
<feature type="helix" evidence="15">
    <location>
        <begin position="490"/>
        <end position="495"/>
    </location>
</feature>
<feature type="helix" evidence="15">
    <location>
        <begin position="508"/>
        <end position="523"/>
    </location>
</feature>
<feature type="turn" evidence="15">
    <location>
        <begin position="524"/>
        <end position="526"/>
    </location>
</feature>
<feature type="helix" evidence="15">
    <location>
        <begin position="530"/>
        <end position="536"/>
    </location>
</feature>
<feature type="helix" evidence="15">
    <location>
        <begin position="539"/>
        <end position="542"/>
    </location>
</feature>
<feature type="helix" evidence="15">
    <location>
        <begin position="547"/>
        <end position="558"/>
    </location>
</feature>
<feature type="strand" evidence="14">
    <location>
        <begin position="562"/>
        <end position="565"/>
    </location>
</feature>
<feature type="helix" evidence="15">
    <location>
        <begin position="572"/>
        <end position="574"/>
    </location>
</feature>
<feature type="helix" evidence="15">
    <location>
        <begin position="576"/>
        <end position="585"/>
    </location>
</feature>
<feature type="helix" evidence="15">
    <location>
        <begin position="587"/>
        <end position="591"/>
    </location>
</feature>
<feature type="helix" evidence="15">
    <location>
        <begin position="596"/>
        <end position="608"/>
    </location>
</feature>
<feature type="helix" evidence="15">
    <location>
        <begin position="612"/>
        <end position="614"/>
    </location>
</feature>
<feature type="helix" evidence="15">
    <location>
        <begin position="615"/>
        <end position="621"/>
    </location>
</feature>
<feature type="turn" evidence="15">
    <location>
        <begin position="622"/>
        <end position="624"/>
    </location>
</feature>
<feature type="helix" evidence="15">
    <location>
        <begin position="628"/>
        <end position="639"/>
    </location>
</feature>
<feature type="helix" evidence="15">
    <location>
        <begin position="643"/>
        <end position="653"/>
    </location>
</feature>
<feature type="helix" evidence="15">
    <location>
        <begin position="654"/>
        <end position="656"/>
    </location>
</feature>
<feature type="helix" evidence="15">
    <location>
        <begin position="659"/>
        <end position="668"/>
    </location>
</feature>
<name>LKHA4_YEAST</name>
<accession>Q10740</accession>
<accession>D6W1D4</accession>
<protein>
    <recommendedName>
        <fullName evidence="9">Leucine aminopeptidase 2</fullName>
        <ecNumber evidence="8">3.4.11.-</ecNumber>
    </recommendedName>
    <alternativeName>
        <fullName evidence="12">Epoxide hydrolase</fullName>
        <ecNumber evidence="7">3.3.2.10</ecNumber>
    </alternativeName>
    <alternativeName>
        <fullName>Leucyl aminopeptidase yscIV</fullName>
        <shortName>AP IV</shortName>
    </alternativeName>
    <alternativeName>
        <fullName evidence="10">Leukotriene A-4 hydrolase homolog</fullName>
        <shortName>LTA-4 hydrolase</shortName>
    </alternativeName>
</protein>